<protein>
    <recommendedName>
        <fullName>Lipid phosphate phosphatase 2</fullName>
        <shortName>AtLPP2</shortName>
        <ecNumber>3.1.3.-</ecNumber>
    </recommendedName>
    <alternativeName>
        <fullName>Phosphatidic acid phosphatase 2</fullName>
        <shortName>AtPAP2</shortName>
    </alternativeName>
    <alternativeName>
        <fullName>Prenyl diphosphate phosphatase</fullName>
    </alternativeName>
</protein>
<comment type="function">
    <text evidence="2 3 4">May play a general 'housekeeping role' in lipid metabolism. Exhibits both diacylglycerol pyrophosphate (DGPP) phosphatase and phosphatidate (PA) phosphatase activities with no preference for either substrate. May play a role downstream of the ABA signaling pathway during seed germination and in stomatal movement in leaves.</text>
</comment>
<comment type="activity regulation">
    <text evidence="2">PA phosphatase activity not inhibited by N-ethylmaleimide.</text>
</comment>
<comment type="subcellular location">
    <subcellularLocation>
        <location evidence="5">Membrane</location>
        <topology evidence="5">Multi-pass membrane protein</topology>
    </subcellularLocation>
</comment>
<comment type="tissue specificity">
    <text evidence="2 3">Expressed in roots, stems, leaves, buds, flowers and siliques.</text>
</comment>
<comment type="induction">
    <text evidence="2 4">Constitutively expressed. Not induced by stress, mastoparan or hypersensitive response elicitor harpin. Down-regulated by ABA.</text>
</comment>
<comment type="disruption phenotype">
    <text evidence="3">No visible phenotype under normal growth conditions, but mutant plants show hypersensitivity to ABA and significant PA accumulation during seed germination.</text>
</comment>
<comment type="similarity">
    <text evidence="5">Belongs to the PA-phosphatase related phosphoesterase family.</text>
</comment>
<dbReference type="EC" id="3.1.3.-"/>
<dbReference type="EMBL" id="AB053950">
    <property type="protein sequence ID" value="BAC41335.1"/>
    <property type="molecule type" value="mRNA"/>
</dbReference>
<dbReference type="EMBL" id="AB061407">
    <property type="protein sequence ID" value="BAB47574.1"/>
    <property type="molecule type" value="mRNA"/>
</dbReference>
<dbReference type="EMBL" id="AC007591">
    <property type="protein sequence ID" value="AAD39637.1"/>
    <property type="molecule type" value="Genomic_DNA"/>
</dbReference>
<dbReference type="EMBL" id="CP002684">
    <property type="protein sequence ID" value="AEE29263.1"/>
    <property type="molecule type" value="Genomic_DNA"/>
</dbReference>
<dbReference type="EMBL" id="BT003912">
    <property type="protein sequence ID" value="AAO41959.1"/>
    <property type="molecule type" value="mRNA"/>
</dbReference>
<dbReference type="EMBL" id="BT004969">
    <property type="protein sequence ID" value="AAO50502.1"/>
    <property type="molecule type" value="mRNA"/>
</dbReference>
<dbReference type="EMBL" id="AY087673">
    <property type="protein sequence ID" value="AAM65210.1"/>
    <property type="molecule type" value="mRNA"/>
</dbReference>
<dbReference type="PIR" id="E86284">
    <property type="entry name" value="E86284"/>
</dbReference>
<dbReference type="RefSeq" id="NP_172961.1">
    <property type="nucleotide sequence ID" value="NM_101377.5"/>
</dbReference>
<dbReference type="BioGRID" id="23312">
    <property type="interactions" value="7"/>
</dbReference>
<dbReference type="FunCoup" id="Q9XI60">
    <property type="interactions" value="1863"/>
</dbReference>
<dbReference type="IntAct" id="Q9XI60">
    <property type="interactions" value="6"/>
</dbReference>
<dbReference type="STRING" id="3702.Q9XI60"/>
<dbReference type="GlyCosmos" id="Q9XI60">
    <property type="glycosylation" value="1 site, No reported glycans"/>
</dbReference>
<dbReference type="GlyGen" id="Q9XI60">
    <property type="glycosylation" value="1 site"/>
</dbReference>
<dbReference type="PaxDb" id="3702-AT1G15080.1"/>
<dbReference type="ProteomicsDB" id="238519"/>
<dbReference type="EnsemblPlants" id="AT1G15080.1">
    <property type="protein sequence ID" value="AT1G15080.1"/>
    <property type="gene ID" value="AT1G15080"/>
</dbReference>
<dbReference type="GeneID" id="838072"/>
<dbReference type="Gramene" id="AT1G15080.1">
    <property type="protein sequence ID" value="AT1G15080.1"/>
    <property type="gene ID" value="AT1G15080"/>
</dbReference>
<dbReference type="KEGG" id="ath:AT1G15080"/>
<dbReference type="Araport" id="AT1G15080"/>
<dbReference type="TAIR" id="AT1G15080">
    <property type="gene designation" value="LPP2"/>
</dbReference>
<dbReference type="eggNOG" id="KOG3030">
    <property type="taxonomic scope" value="Eukaryota"/>
</dbReference>
<dbReference type="HOGENOM" id="CLU_021458_5_1_1"/>
<dbReference type="InParanoid" id="Q9XI60"/>
<dbReference type="OMA" id="WFSYRRY"/>
<dbReference type="PhylomeDB" id="Q9XI60"/>
<dbReference type="BioCyc" id="ARA:MONOMER-AT1G15080"/>
<dbReference type="BioCyc" id="MetaCyc:MONOMER-AT1G15080"/>
<dbReference type="PRO" id="PR:Q9XI60"/>
<dbReference type="Proteomes" id="UP000006548">
    <property type="component" value="Chromosome 1"/>
</dbReference>
<dbReference type="ExpressionAtlas" id="Q9XI60">
    <property type="expression patterns" value="baseline and differential"/>
</dbReference>
<dbReference type="GO" id="GO:0016020">
    <property type="term" value="C:membrane"/>
    <property type="evidence" value="ECO:0007669"/>
    <property type="project" value="UniProtKB-SubCell"/>
</dbReference>
<dbReference type="GO" id="GO:0003993">
    <property type="term" value="F:acid phosphatase activity"/>
    <property type="evidence" value="ECO:0000250"/>
    <property type="project" value="TAIR"/>
</dbReference>
<dbReference type="GO" id="GO:0008195">
    <property type="term" value="F:phosphatidate phosphatase activity"/>
    <property type="evidence" value="ECO:0000314"/>
    <property type="project" value="TAIR"/>
</dbReference>
<dbReference type="GO" id="GO:0006644">
    <property type="term" value="P:phospholipid metabolic process"/>
    <property type="evidence" value="ECO:0007669"/>
    <property type="project" value="InterPro"/>
</dbReference>
<dbReference type="CDD" id="cd03390">
    <property type="entry name" value="PAP2_containing_1_like"/>
    <property type="match status" value="1"/>
</dbReference>
<dbReference type="FunFam" id="1.20.144.10:FF:000001">
    <property type="entry name" value="Lipid phosphate phosphatase 2"/>
    <property type="match status" value="1"/>
</dbReference>
<dbReference type="Gene3D" id="1.20.144.10">
    <property type="entry name" value="Phosphatidic acid phosphatase type 2/haloperoxidase"/>
    <property type="match status" value="1"/>
</dbReference>
<dbReference type="InterPro" id="IPR036938">
    <property type="entry name" value="P_Acid_Pase_2/haloperoxi_sf"/>
</dbReference>
<dbReference type="InterPro" id="IPR000326">
    <property type="entry name" value="P_Acid_Pase_2/haloperoxidase"/>
</dbReference>
<dbReference type="InterPro" id="IPR043216">
    <property type="entry name" value="PA_PP_rel"/>
</dbReference>
<dbReference type="PANTHER" id="PTHR10165">
    <property type="entry name" value="LIPID PHOSPHATE PHOSPHATASE"/>
    <property type="match status" value="1"/>
</dbReference>
<dbReference type="PANTHER" id="PTHR10165:SF35">
    <property type="entry name" value="RE23632P"/>
    <property type="match status" value="1"/>
</dbReference>
<dbReference type="Pfam" id="PF01569">
    <property type="entry name" value="PAP2"/>
    <property type="match status" value="1"/>
</dbReference>
<dbReference type="SMART" id="SM00014">
    <property type="entry name" value="acidPPc"/>
    <property type="match status" value="1"/>
</dbReference>
<dbReference type="SUPFAM" id="SSF48317">
    <property type="entry name" value="Acid phosphatase/Vanadium-dependent haloperoxidase"/>
    <property type="match status" value="1"/>
</dbReference>
<proteinExistence type="evidence at transcript level"/>
<evidence type="ECO:0000255" key="1"/>
<evidence type="ECO:0000269" key="2">
    <source>
    </source>
</evidence>
<evidence type="ECO:0000269" key="3">
    <source>
    </source>
</evidence>
<evidence type="ECO:0000269" key="4">
    <source>
    </source>
</evidence>
<evidence type="ECO:0000305" key="5"/>
<name>LPP2_ARATH</name>
<keyword id="KW-0325">Glycoprotein</keyword>
<keyword id="KW-0378">Hydrolase</keyword>
<keyword id="KW-0472">Membrane</keyword>
<keyword id="KW-1185">Reference proteome</keyword>
<keyword id="KW-0346">Stress response</keyword>
<keyword id="KW-0812">Transmembrane</keyword>
<keyword id="KW-1133">Transmembrane helix</keyword>
<organism>
    <name type="scientific">Arabidopsis thaliana</name>
    <name type="common">Mouse-ear cress</name>
    <dbReference type="NCBI Taxonomy" id="3702"/>
    <lineage>
        <taxon>Eukaryota</taxon>
        <taxon>Viridiplantae</taxon>
        <taxon>Streptophyta</taxon>
        <taxon>Embryophyta</taxon>
        <taxon>Tracheophyta</taxon>
        <taxon>Spermatophyta</taxon>
        <taxon>Magnoliopsida</taxon>
        <taxon>eudicotyledons</taxon>
        <taxon>Gunneridae</taxon>
        <taxon>Pentapetalae</taxon>
        <taxon>rosids</taxon>
        <taxon>malvids</taxon>
        <taxon>Brassicales</taxon>
        <taxon>Brassicaceae</taxon>
        <taxon>Camelineae</taxon>
        <taxon>Arabidopsis</taxon>
    </lineage>
</organism>
<feature type="chain" id="PRO_0000220916" description="Lipid phosphate phosphatase 2">
    <location>
        <begin position="1"/>
        <end position="290"/>
    </location>
</feature>
<feature type="transmembrane region" description="Helical" evidence="1">
    <location>
        <begin position="26"/>
        <end position="46"/>
    </location>
</feature>
<feature type="transmembrane region" description="Helical" evidence="1">
    <location>
        <begin position="69"/>
        <end position="89"/>
    </location>
</feature>
<feature type="transmembrane region" description="Helical" evidence="1">
    <location>
        <begin position="93"/>
        <end position="113"/>
    </location>
</feature>
<feature type="transmembrane region" description="Helical" evidence="1">
    <location>
        <begin position="162"/>
        <end position="182"/>
    </location>
</feature>
<feature type="transmembrane region" description="Helical" evidence="1">
    <location>
        <begin position="193"/>
        <end position="213"/>
    </location>
</feature>
<feature type="transmembrane region" description="Helical" evidence="1">
    <location>
        <begin position="226"/>
        <end position="246"/>
    </location>
</feature>
<feature type="glycosylation site" description="N-linked (GlcNAc...) asparagine" evidence="1">
    <location>
        <position position="142"/>
    </location>
</feature>
<gene>
    <name type="primary">LPP2</name>
    <name type="synonym">PAP2</name>
    <name type="ordered locus">At1g15080</name>
    <name type="ORF">F9L1.2</name>
</gene>
<sequence>MPEIHLGAHTIRSHGVTVARFHMHDWLILLLLIVIEIVLNVIEPFHRFVGEDMLTDLRYPLQDNTIPFWAVPLIAVVLPFAVICVYYFIRNDVYDLHHAILGLLFSVLITGVITDAIKDAVGRPRPDFFWRCFPDGIGIFHNVTKNVLCTGAKDVVKEGHKSFPSGHTSWSFAGLGFLSLYLSGKIRVFDQRGHVAKLCIVILPLLVAALVGVSRVDDYWHHWQDVFGGAIIGLTVATFCYLQFFPPPYDPDGWGPHAYFQMLADSRNDVQDSAGMNHLSVRQTELESVR</sequence>
<reference key="1">
    <citation type="journal article" date="2001" name="J. Biol. Chem.">
        <title>Lipid phosphate phosphatases in Arabidopsis. Regulation of the AtLPP1 gene in response to stress.</title>
        <authorList>
            <person name="Pierrugues O."/>
            <person name="Brutesco C."/>
            <person name="Oshiro J."/>
            <person name="Gouy M."/>
            <person name="Deveaux Y."/>
            <person name="Carman G.M."/>
            <person name="Thuriaux P."/>
            <person name="Kazmaier M."/>
        </authorList>
    </citation>
    <scope>NUCLEOTIDE SEQUENCE [MRNA]</scope>
    <scope>FUNCTION</scope>
    <scope>ACTIVITY REGULATION</scope>
    <scope>INDUCTION</scope>
    <scope>TISSUE SPECIFICITY</scope>
</reference>
<reference key="2">
    <citation type="submission" date="2001-01" db="EMBL/GenBank/DDBJ databases">
        <title>Prenyl alcohol production by overexpression of prenyl diphosphate phosphatase in Yeast Saccharomyces cerevisiae.</title>
        <authorList>
            <person name="Tokuhiro K."/>
            <person name="Muramoto N."/>
            <person name="Yamada Y."/>
            <person name="Asami O."/>
            <person name="Hirai M."/>
            <person name="Obata S."/>
            <person name="Ohto C."/>
            <person name="Muramatsu M."/>
        </authorList>
    </citation>
    <scope>NUCLEOTIDE SEQUENCE [MRNA]</scope>
    <source>
        <strain>cv. Columbia</strain>
    </source>
</reference>
<reference key="3">
    <citation type="submission" date="2001-05" db="EMBL/GenBank/DDBJ databases">
        <title>A cDNA sequence encoding a phosphatidic acid phosphatase in Arabidopsis thaliana.</title>
        <authorList>
            <person name="Katagiri T."/>
            <person name="Shinozaki K."/>
        </authorList>
    </citation>
    <scope>NUCLEOTIDE SEQUENCE [MRNA]</scope>
</reference>
<reference key="4">
    <citation type="journal article" date="2000" name="Nature">
        <title>Sequence and analysis of chromosome 1 of the plant Arabidopsis thaliana.</title>
        <authorList>
            <person name="Theologis A."/>
            <person name="Ecker J.R."/>
            <person name="Palm C.J."/>
            <person name="Federspiel N.A."/>
            <person name="Kaul S."/>
            <person name="White O."/>
            <person name="Alonso J."/>
            <person name="Altafi H."/>
            <person name="Araujo R."/>
            <person name="Bowman C.L."/>
            <person name="Brooks S.Y."/>
            <person name="Buehler E."/>
            <person name="Chan A."/>
            <person name="Chao Q."/>
            <person name="Chen H."/>
            <person name="Cheuk R.F."/>
            <person name="Chin C.W."/>
            <person name="Chung M.K."/>
            <person name="Conn L."/>
            <person name="Conway A.B."/>
            <person name="Conway A.R."/>
            <person name="Creasy T.H."/>
            <person name="Dewar K."/>
            <person name="Dunn P."/>
            <person name="Etgu P."/>
            <person name="Feldblyum T.V."/>
            <person name="Feng J.-D."/>
            <person name="Fong B."/>
            <person name="Fujii C.Y."/>
            <person name="Gill J.E."/>
            <person name="Goldsmith A.D."/>
            <person name="Haas B."/>
            <person name="Hansen N.F."/>
            <person name="Hughes B."/>
            <person name="Huizar L."/>
            <person name="Hunter J.L."/>
            <person name="Jenkins J."/>
            <person name="Johnson-Hopson C."/>
            <person name="Khan S."/>
            <person name="Khaykin E."/>
            <person name="Kim C.J."/>
            <person name="Koo H.L."/>
            <person name="Kremenetskaia I."/>
            <person name="Kurtz D.B."/>
            <person name="Kwan A."/>
            <person name="Lam B."/>
            <person name="Langin-Hooper S."/>
            <person name="Lee A."/>
            <person name="Lee J.M."/>
            <person name="Lenz C.A."/>
            <person name="Li J.H."/>
            <person name="Li Y.-P."/>
            <person name="Lin X."/>
            <person name="Liu S.X."/>
            <person name="Liu Z.A."/>
            <person name="Luros J.S."/>
            <person name="Maiti R."/>
            <person name="Marziali A."/>
            <person name="Militscher J."/>
            <person name="Miranda M."/>
            <person name="Nguyen M."/>
            <person name="Nierman W.C."/>
            <person name="Osborne B.I."/>
            <person name="Pai G."/>
            <person name="Peterson J."/>
            <person name="Pham P.K."/>
            <person name="Rizzo M."/>
            <person name="Rooney T."/>
            <person name="Rowley D."/>
            <person name="Sakano H."/>
            <person name="Salzberg S.L."/>
            <person name="Schwartz J.R."/>
            <person name="Shinn P."/>
            <person name="Southwick A.M."/>
            <person name="Sun H."/>
            <person name="Tallon L.J."/>
            <person name="Tambunga G."/>
            <person name="Toriumi M.J."/>
            <person name="Town C.D."/>
            <person name="Utterback T."/>
            <person name="Van Aken S."/>
            <person name="Vaysberg M."/>
            <person name="Vysotskaia V.S."/>
            <person name="Walker M."/>
            <person name="Wu D."/>
            <person name="Yu G."/>
            <person name="Fraser C.M."/>
            <person name="Venter J.C."/>
            <person name="Davis R.W."/>
        </authorList>
    </citation>
    <scope>NUCLEOTIDE SEQUENCE [LARGE SCALE GENOMIC DNA]</scope>
    <source>
        <strain>cv. Columbia</strain>
    </source>
</reference>
<reference key="5">
    <citation type="journal article" date="2017" name="Plant J.">
        <title>Araport11: a complete reannotation of the Arabidopsis thaliana reference genome.</title>
        <authorList>
            <person name="Cheng C.Y."/>
            <person name="Krishnakumar V."/>
            <person name="Chan A.P."/>
            <person name="Thibaud-Nissen F."/>
            <person name="Schobel S."/>
            <person name="Town C.D."/>
        </authorList>
    </citation>
    <scope>GENOME REANNOTATION</scope>
    <source>
        <strain>cv. Columbia</strain>
    </source>
</reference>
<reference key="6">
    <citation type="journal article" date="2003" name="Science">
        <title>Empirical analysis of transcriptional activity in the Arabidopsis genome.</title>
        <authorList>
            <person name="Yamada K."/>
            <person name="Lim J."/>
            <person name="Dale J.M."/>
            <person name="Chen H."/>
            <person name="Shinn P."/>
            <person name="Palm C.J."/>
            <person name="Southwick A.M."/>
            <person name="Wu H.C."/>
            <person name="Kim C.J."/>
            <person name="Nguyen M."/>
            <person name="Pham P.K."/>
            <person name="Cheuk R.F."/>
            <person name="Karlin-Newmann G."/>
            <person name="Liu S.X."/>
            <person name="Lam B."/>
            <person name="Sakano H."/>
            <person name="Wu T."/>
            <person name="Yu G."/>
            <person name="Miranda M."/>
            <person name="Quach H.L."/>
            <person name="Tripp M."/>
            <person name="Chang C.H."/>
            <person name="Lee J.M."/>
            <person name="Toriumi M.J."/>
            <person name="Chan M.M."/>
            <person name="Tang C.C."/>
            <person name="Onodera C.S."/>
            <person name="Deng J.M."/>
            <person name="Akiyama K."/>
            <person name="Ansari Y."/>
            <person name="Arakawa T."/>
            <person name="Banh J."/>
            <person name="Banno F."/>
            <person name="Bowser L."/>
            <person name="Brooks S.Y."/>
            <person name="Carninci P."/>
            <person name="Chao Q."/>
            <person name="Choy N."/>
            <person name="Enju A."/>
            <person name="Goldsmith A.D."/>
            <person name="Gurjal M."/>
            <person name="Hansen N.F."/>
            <person name="Hayashizaki Y."/>
            <person name="Johnson-Hopson C."/>
            <person name="Hsuan V.W."/>
            <person name="Iida K."/>
            <person name="Karnes M."/>
            <person name="Khan S."/>
            <person name="Koesema E."/>
            <person name="Ishida J."/>
            <person name="Jiang P.X."/>
            <person name="Jones T."/>
            <person name="Kawai J."/>
            <person name="Kamiya A."/>
            <person name="Meyers C."/>
            <person name="Nakajima M."/>
            <person name="Narusaka M."/>
            <person name="Seki M."/>
            <person name="Sakurai T."/>
            <person name="Satou M."/>
            <person name="Tamse R."/>
            <person name="Vaysberg M."/>
            <person name="Wallender E.K."/>
            <person name="Wong C."/>
            <person name="Yamamura Y."/>
            <person name="Yuan S."/>
            <person name="Shinozaki K."/>
            <person name="Davis R.W."/>
            <person name="Theologis A."/>
            <person name="Ecker J.R."/>
        </authorList>
    </citation>
    <scope>NUCLEOTIDE SEQUENCE [LARGE SCALE MRNA]</scope>
    <source>
        <strain>cv. Columbia</strain>
    </source>
</reference>
<reference key="7">
    <citation type="submission" date="2002-03" db="EMBL/GenBank/DDBJ databases">
        <title>Full-length cDNA from Arabidopsis thaliana.</title>
        <authorList>
            <person name="Brover V.V."/>
            <person name="Troukhan M.E."/>
            <person name="Alexandrov N.A."/>
            <person name="Lu Y.-P."/>
            <person name="Flavell R.B."/>
            <person name="Feldmann K.A."/>
        </authorList>
    </citation>
    <scope>NUCLEOTIDE SEQUENCE [LARGE SCALE MRNA]</scope>
</reference>
<reference key="8">
    <citation type="journal article" date="2005" name="Plant J.">
        <title>An important role of phosphatidic acid in ABA signaling during germination in Arabidopsis thaliana.</title>
        <authorList>
            <person name="Katagiri T."/>
            <person name="Ishiyama K."/>
            <person name="Kato T."/>
            <person name="Tabata S."/>
            <person name="Kobayashi M."/>
            <person name="Shinozaki K."/>
        </authorList>
    </citation>
    <scope>FUNCTION</scope>
    <scope>TISSUE SPECIFICITY</scope>
    <scope>DISRUPTION PHENOTYPE</scope>
</reference>
<reference key="9">
    <citation type="journal article" date="2011" name="Plant Physiol. Biochem.">
        <title>Arabidopsis thaliana lipid phosphate phosphatase 2 is involved in abscisic acid signalling in leaves.</title>
        <authorList>
            <person name="Paradis S."/>
            <person name="Villasuso A.L."/>
            <person name="Aguayo S.S."/>
            <person name="Maldiney R."/>
            <person name="Habricot Y."/>
            <person name="Zalejski C."/>
            <person name="Machado E."/>
            <person name="Sotta B."/>
            <person name="Miginiac E."/>
            <person name="Jeannette E."/>
        </authorList>
    </citation>
    <scope>FUNCTION</scope>
    <scope>INDUCTION</scope>
</reference>
<accession>Q9XI60</accession>